<feature type="chain" id="PRO_0000074165" description="Oleandomycin glycosyltransferase">
    <location>
        <begin position="1"/>
        <end position="430"/>
    </location>
</feature>
<feature type="region of interest" description="Disordered" evidence="1">
    <location>
        <begin position="385"/>
        <end position="430"/>
    </location>
</feature>
<feature type="compositionally biased region" description="Basic and acidic residues" evidence="1">
    <location>
        <begin position="386"/>
        <end position="409"/>
    </location>
</feature>
<feature type="strand" evidence="5">
    <location>
        <begin position="9"/>
        <end position="13"/>
    </location>
</feature>
<feature type="helix" evidence="5">
    <location>
        <begin position="18"/>
        <end position="20"/>
    </location>
</feature>
<feature type="helix" evidence="5">
    <location>
        <begin position="22"/>
        <end position="24"/>
    </location>
</feature>
<feature type="helix" evidence="5">
    <location>
        <begin position="25"/>
        <end position="34"/>
    </location>
</feature>
<feature type="strand" evidence="5">
    <location>
        <begin position="37"/>
        <end position="42"/>
    </location>
</feature>
<feature type="helix" evidence="5">
    <location>
        <begin position="44"/>
        <end position="46"/>
    </location>
</feature>
<feature type="helix" evidence="5">
    <location>
        <begin position="47"/>
        <end position="51"/>
    </location>
</feature>
<feature type="turn" evidence="4">
    <location>
        <begin position="52"/>
        <end position="54"/>
    </location>
</feature>
<feature type="strand" evidence="5">
    <location>
        <begin position="56"/>
        <end position="59"/>
    </location>
</feature>
<feature type="strand" evidence="5">
    <location>
        <begin position="67"/>
        <end position="69"/>
    </location>
</feature>
<feature type="helix" evidence="5">
    <location>
        <begin position="71"/>
        <end position="74"/>
    </location>
</feature>
<feature type="helix" evidence="5">
    <location>
        <begin position="78"/>
        <end position="101"/>
    </location>
</feature>
<feature type="strand" evidence="5">
    <location>
        <begin position="106"/>
        <end position="111"/>
    </location>
</feature>
<feature type="helix" evidence="5">
    <location>
        <begin position="115"/>
        <end position="124"/>
    </location>
</feature>
<feature type="strand" evidence="5">
    <location>
        <begin position="128"/>
        <end position="134"/>
    </location>
</feature>
<feature type="helix" evidence="5">
    <location>
        <begin position="141"/>
        <end position="144"/>
    </location>
</feature>
<feature type="helix" evidence="5">
    <location>
        <begin position="146"/>
        <end position="154"/>
    </location>
</feature>
<feature type="helix" evidence="5">
    <location>
        <begin position="157"/>
        <end position="172"/>
    </location>
</feature>
<feature type="helix" evidence="5">
    <location>
        <begin position="179"/>
        <end position="184"/>
    </location>
</feature>
<feature type="strand" evidence="5">
    <location>
        <begin position="187"/>
        <end position="191"/>
    </location>
</feature>
<feature type="helix" evidence="5">
    <location>
        <begin position="195"/>
        <end position="197"/>
    </location>
</feature>
<feature type="helix" evidence="5">
    <location>
        <begin position="201"/>
        <end position="203"/>
    </location>
</feature>
<feature type="turn" evidence="5">
    <location>
        <begin position="206"/>
        <end position="208"/>
    </location>
</feature>
<feature type="strand" evidence="5">
    <location>
        <begin position="209"/>
        <end position="211"/>
    </location>
</feature>
<feature type="strand" evidence="5">
    <location>
        <begin position="232"/>
        <end position="237"/>
    </location>
</feature>
<feature type="turn" evidence="3">
    <location>
        <begin position="240"/>
        <end position="242"/>
    </location>
</feature>
<feature type="helix" evidence="5">
    <location>
        <begin position="247"/>
        <end position="257"/>
    </location>
</feature>
<feature type="strand" evidence="5">
    <location>
        <begin position="263"/>
        <end position="268"/>
    </location>
</feature>
<feature type="strand" evidence="3">
    <location>
        <begin position="271"/>
        <end position="273"/>
    </location>
</feature>
<feature type="helix" evidence="3">
    <location>
        <begin position="275"/>
        <end position="278"/>
    </location>
</feature>
<feature type="strand" evidence="5">
    <location>
        <begin position="285"/>
        <end position="289"/>
    </location>
</feature>
<feature type="helix" evidence="5">
    <location>
        <begin position="293"/>
        <end position="297"/>
    </location>
</feature>
<feature type="strand" evidence="5">
    <location>
        <begin position="301"/>
        <end position="305"/>
    </location>
</feature>
<feature type="helix" evidence="5">
    <location>
        <begin position="309"/>
        <end position="317"/>
    </location>
</feature>
<feature type="strand" evidence="5">
    <location>
        <begin position="322"/>
        <end position="324"/>
    </location>
</feature>
<feature type="helix" evidence="3">
    <location>
        <begin position="329"/>
        <end position="331"/>
    </location>
</feature>
<feature type="helix" evidence="5">
    <location>
        <begin position="332"/>
        <end position="340"/>
    </location>
</feature>
<feature type="strand" evidence="5">
    <location>
        <begin position="343"/>
        <end position="346"/>
    </location>
</feature>
<feature type="turn" evidence="4">
    <location>
        <begin position="349"/>
        <end position="351"/>
    </location>
</feature>
<feature type="helix" evidence="5">
    <location>
        <begin position="354"/>
        <end position="365"/>
    </location>
</feature>
<feature type="helix" evidence="5">
    <location>
        <begin position="368"/>
        <end position="384"/>
    </location>
</feature>
<feature type="helix" evidence="5">
    <location>
        <begin position="387"/>
        <end position="397"/>
    </location>
</feature>
<evidence type="ECO:0000256" key="1">
    <source>
        <dbReference type="SAM" id="MobiDB-lite"/>
    </source>
</evidence>
<evidence type="ECO:0000305" key="2"/>
<evidence type="ECO:0007829" key="3">
    <source>
        <dbReference type="PDB" id="2IYF"/>
    </source>
</evidence>
<evidence type="ECO:0007829" key="4">
    <source>
        <dbReference type="PDB" id="4M60"/>
    </source>
</evidence>
<evidence type="ECO:0007829" key="5">
    <source>
        <dbReference type="PDB" id="4M83"/>
    </source>
</evidence>
<proteinExistence type="evidence at protein level"/>
<name>OLED_STRAT</name>
<accession>Q53685</accession>
<dbReference type="EC" id="2.4.1.-"/>
<dbReference type="EMBL" id="Z22577">
    <property type="protein sequence ID" value="CAA80301.1"/>
    <property type="molecule type" value="Genomic_DNA"/>
</dbReference>
<dbReference type="PIR" id="S33184">
    <property type="entry name" value="S33184"/>
</dbReference>
<dbReference type="PDB" id="2IYF">
    <property type="method" value="X-ray"/>
    <property type="resolution" value="1.70 A"/>
    <property type="chains" value="A/B=1-413"/>
</dbReference>
<dbReference type="PDB" id="4M60">
    <property type="method" value="X-ray"/>
    <property type="resolution" value="1.77 A"/>
    <property type="chains" value="A=1-413"/>
</dbReference>
<dbReference type="PDB" id="4M7P">
    <property type="method" value="X-ray"/>
    <property type="resolution" value="1.77 A"/>
    <property type="chains" value="A=1-413"/>
</dbReference>
<dbReference type="PDB" id="4M83">
    <property type="method" value="X-ray"/>
    <property type="resolution" value="1.70 A"/>
    <property type="chains" value="A/B=1-413"/>
</dbReference>
<dbReference type="PDBsum" id="2IYF"/>
<dbReference type="PDBsum" id="4M60"/>
<dbReference type="PDBsum" id="4M7P"/>
<dbReference type="PDBsum" id="4M83"/>
<dbReference type="SMR" id="Q53685"/>
<dbReference type="STRING" id="1890.AFM16_29540"/>
<dbReference type="ChEMBL" id="CHEMBL3308957"/>
<dbReference type="CAZy" id="GT1">
    <property type="family name" value="Glycosyltransferase Family 1"/>
</dbReference>
<dbReference type="KEGG" id="ag:CAA80301"/>
<dbReference type="BioCyc" id="MetaCyc:MONOMER-17058"/>
<dbReference type="EvolutionaryTrace" id="Q53685"/>
<dbReference type="GO" id="GO:0016758">
    <property type="term" value="F:hexosyltransferase activity"/>
    <property type="evidence" value="ECO:0007669"/>
    <property type="project" value="InterPro"/>
</dbReference>
<dbReference type="GO" id="GO:0008194">
    <property type="term" value="F:UDP-glycosyltransferase activity"/>
    <property type="evidence" value="ECO:0007669"/>
    <property type="project" value="InterPro"/>
</dbReference>
<dbReference type="GO" id="GO:0017000">
    <property type="term" value="P:antibiotic biosynthetic process"/>
    <property type="evidence" value="ECO:0007669"/>
    <property type="project" value="UniProtKB-ARBA"/>
</dbReference>
<dbReference type="GO" id="GO:0046677">
    <property type="term" value="P:response to antibiotic"/>
    <property type="evidence" value="ECO:0007669"/>
    <property type="project" value="UniProtKB-KW"/>
</dbReference>
<dbReference type="CDD" id="cd03784">
    <property type="entry name" value="GT1_Gtf-like"/>
    <property type="match status" value="1"/>
</dbReference>
<dbReference type="FunFam" id="3.40.50.2000:FF:000072">
    <property type="entry name" value="Glycosyl transferase"/>
    <property type="match status" value="1"/>
</dbReference>
<dbReference type="Gene3D" id="3.40.50.2000">
    <property type="entry name" value="Glycogen Phosphorylase B"/>
    <property type="match status" value="2"/>
</dbReference>
<dbReference type="InterPro" id="IPR010610">
    <property type="entry name" value="EryCIII-like_C"/>
</dbReference>
<dbReference type="InterPro" id="IPR050426">
    <property type="entry name" value="Glycosyltransferase_28"/>
</dbReference>
<dbReference type="InterPro" id="IPR002213">
    <property type="entry name" value="UDP_glucos_trans"/>
</dbReference>
<dbReference type="InterPro" id="IPR035595">
    <property type="entry name" value="UDP_glycos_trans_CS"/>
</dbReference>
<dbReference type="InterPro" id="IPR006326">
    <property type="entry name" value="UDPGT_MGT-like"/>
</dbReference>
<dbReference type="NCBIfam" id="NF033129">
    <property type="entry name" value="macro_glyco_Mgt"/>
    <property type="match status" value="1"/>
</dbReference>
<dbReference type="NCBIfam" id="TIGR01426">
    <property type="entry name" value="MGT"/>
    <property type="match status" value="1"/>
</dbReference>
<dbReference type="PANTHER" id="PTHR48050">
    <property type="entry name" value="STEROL 3-BETA-GLUCOSYLTRANSFERASE"/>
    <property type="match status" value="1"/>
</dbReference>
<dbReference type="PANTHER" id="PTHR48050:SF13">
    <property type="entry name" value="STEROL 3-BETA-GLUCOSYLTRANSFERASE UGT80A2"/>
    <property type="match status" value="1"/>
</dbReference>
<dbReference type="Pfam" id="PF06722">
    <property type="entry name" value="EryCIII-like_C"/>
    <property type="match status" value="1"/>
</dbReference>
<dbReference type="SUPFAM" id="SSF53756">
    <property type="entry name" value="UDP-Glycosyltransferase/glycogen phosphorylase"/>
    <property type="match status" value="1"/>
</dbReference>
<dbReference type="PROSITE" id="PS00375">
    <property type="entry name" value="UDPGT"/>
    <property type="match status" value="1"/>
</dbReference>
<protein>
    <recommendedName>
        <fullName>Oleandomycin glycosyltransferase</fullName>
        <ecNumber>2.4.1.-</ecNumber>
    </recommendedName>
</protein>
<gene>
    <name type="primary">oleD</name>
    <name type="synonym">UGT102A2</name>
</gene>
<comment type="function">
    <text>Specifically inactivates oleandomycin via 2'-O-glycosylation using UDP-glucose.</text>
</comment>
<comment type="similarity">
    <text evidence="2">Belongs to the UDP-glycosyltransferase family.</text>
</comment>
<sequence length="430" mass="47136">MTTQTTPAHIAMFSIAAHGHVNPSLEVIRELVARGHRVTYAIPPVFADKVAATGPRPVLYHSTLPGPDADPEAWGSTLLDNRRTFLNDAIQALPQLADAYADDIPDLVLHDITSYPARVLARRWGVPAVSLSPNLVAWKGYEEEVAEPMWREPRQTERGRAYYARFEAWLKENGITEHPDTFASHPPRSLVLIPKALQPHADRVDEDVYTFVGACQGDRAEEGGWQRPAGAEKVVLVSLGSAFTKQPAFYRECVRAFGNLPGWHLVLQIGRKVTPAELGELPDNVEVHDWVPQLAILRQADLFVTHAGAGGSQEGLATATPMIAVPQAVDQFGNADMLQGLGVARKLATEEATADLLRETALALVDDPEVARRLRRIQAEMAQEGGTRRAADLIEAELPARHERQEPVGDRPNVGDRPAGVRSDRQRSAL</sequence>
<reference key="1">
    <citation type="journal article" date="1993" name="Gene">
        <title>Characterization of a Streptomyces antibioticus gene cluster encoding a glycosyltransferase involved in oleandomycin inactivation.</title>
        <authorList>
            <person name="Hernandez C."/>
            <person name="Olano C."/>
            <person name="Mendez C."/>
            <person name="Salas J.A."/>
        </authorList>
    </citation>
    <scope>NUCLEOTIDE SEQUENCE [GENOMIC DNA]</scope>
    <source>
        <strain>ATCC 11891 / DSM 40868 / BCRC 11580 / NCIMB 11506 / PSA 205</strain>
    </source>
</reference>
<keyword id="KW-0002">3D-structure</keyword>
<keyword id="KW-0046">Antibiotic resistance</keyword>
<keyword id="KW-0328">Glycosyltransferase</keyword>
<keyword id="KW-0808">Transferase</keyword>
<organism>
    <name type="scientific">Streptomyces antibioticus</name>
    <dbReference type="NCBI Taxonomy" id="1890"/>
    <lineage>
        <taxon>Bacteria</taxon>
        <taxon>Bacillati</taxon>
        <taxon>Actinomycetota</taxon>
        <taxon>Actinomycetes</taxon>
        <taxon>Kitasatosporales</taxon>
        <taxon>Streptomycetaceae</taxon>
        <taxon>Streptomyces</taxon>
    </lineage>
</organism>